<dbReference type="EMBL" id="CP000653">
    <property type="protein sequence ID" value="ABP59889.1"/>
    <property type="molecule type" value="Genomic_DNA"/>
</dbReference>
<dbReference type="RefSeq" id="WP_012016608.1">
    <property type="nucleotide sequence ID" value="NC_009436.1"/>
</dbReference>
<dbReference type="SMR" id="A4W859"/>
<dbReference type="STRING" id="399742.Ent638_1208"/>
<dbReference type="KEGG" id="ent:Ent638_1208"/>
<dbReference type="eggNOG" id="COG2156">
    <property type="taxonomic scope" value="Bacteria"/>
</dbReference>
<dbReference type="HOGENOM" id="CLU_077094_2_0_6"/>
<dbReference type="OrthoDB" id="9788285at2"/>
<dbReference type="Proteomes" id="UP000000230">
    <property type="component" value="Chromosome"/>
</dbReference>
<dbReference type="GO" id="GO:0005886">
    <property type="term" value="C:plasma membrane"/>
    <property type="evidence" value="ECO:0007669"/>
    <property type="project" value="UniProtKB-SubCell"/>
</dbReference>
<dbReference type="GO" id="GO:0005524">
    <property type="term" value="F:ATP binding"/>
    <property type="evidence" value="ECO:0007669"/>
    <property type="project" value="UniProtKB-UniRule"/>
</dbReference>
<dbReference type="GO" id="GO:0008556">
    <property type="term" value="F:P-type potassium transmembrane transporter activity"/>
    <property type="evidence" value="ECO:0007669"/>
    <property type="project" value="InterPro"/>
</dbReference>
<dbReference type="HAMAP" id="MF_00276">
    <property type="entry name" value="KdpC"/>
    <property type="match status" value="1"/>
</dbReference>
<dbReference type="InterPro" id="IPR003820">
    <property type="entry name" value="KdpC"/>
</dbReference>
<dbReference type="NCBIfam" id="TIGR00681">
    <property type="entry name" value="kdpC"/>
    <property type="match status" value="1"/>
</dbReference>
<dbReference type="NCBIfam" id="NF001454">
    <property type="entry name" value="PRK00315.1"/>
    <property type="match status" value="1"/>
</dbReference>
<dbReference type="PANTHER" id="PTHR30042">
    <property type="entry name" value="POTASSIUM-TRANSPORTING ATPASE C CHAIN"/>
    <property type="match status" value="1"/>
</dbReference>
<dbReference type="PANTHER" id="PTHR30042:SF2">
    <property type="entry name" value="POTASSIUM-TRANSPORTING ATPASE KDPC SUBUNIT"/>
    <property type="match status" value="1"/>
</dbReference>
<dbReference type="Pfam" id="PF02669">
    <property type="entry name" value="KdpC"/>
    <property type="match status" value="1"/>
</dbReference>
<dbReference type="PIRSF" id="PIRSF001296">
    <property type="entry name" value="K_ATPase_KdpC"/>
    <property type="match status" value="1"/>
</dbReference>
<evidence type="ECO:0000255" key="1">
    <source>
        <dbReference type="HAMAP-Rule" id="MF_00276"/>
    </source>
</evidence>
<reference key="1">
    <citation type="journal article" date="2010" name="PLoS Genet.">
        <title>Genome sequence of the plant growth promoting endophytic bacterium Enterobacter sp. 638.</title>
        <authorList>
            <person name="Taghavi S."/>
            <person name="van der Lelie D."/>
            <person name="Hoffman A."/>
            <person name="Zhang Y.B."/>
            <person name="Walla M.D."/>
            <person name="Vangronsveld J."/>
            <person name="Newman L."/>
            <person name="Monchy S."/>
        </authorList>
    </citation>
    <scope>NUCLEOTIDE SEQUENCE [LARGE SCALE GENOMIC DNA]</scope>
    <source>
        <strain>638</strain>
    </source>
</reference>
<protein>
    <recommendedName>
        <fullName evidence="1">Potassium-transporting ATPase KdpC subunit</fullName>
    </recommendedName>
    <alternativeName>
        <fullName evidence="1">ATP phosphohydrolase [potassium-transporting] C chain</fullName>
    </alternativeName>
    <alternativeName>
        <fullName evidence="1">Potassium-binding and translocating subunit C</fullName>
    </alternativeName>
    <alternativeName>
        <fullName evidence="1">Potassium-translocating ATPase C chain</fullName>
    </alternativeName>
</protein>
<proteinExistence type="inferred from homology"/>
<keyword id="KW-0067">ATP-binding</keyword>
<keyword id="KW-0997">Cell inner membrane</keyword>
<keyword id="KW-1003">Cell membrane</keyword>
<keyword id="KW-0406">Ion transport</keyword>
<keyword id="KW-0472">Membrane</keyword>
<keyword id="KW-0547">Nucleotide-binding</keyword>
<keyword id="KW-0630">Potassium</keyword>
<keyword id="KW-0633">Potassium transport</keyword>
<keyword id="KW-0812">Transmembrane</keyword>
<keyword id="KW-1133">Transmembrane helix</keyword>
<keyword id="KW-0813">Transport</keyword>
<comment type="function">
    <text evidence="1">Part of the high-affinity ATP-driven potassium transport (or Kdp) system, which catalyzes the hydrolysis of ATP coupled with the electrogenic transport of potassium into the cytoplasm. This subunit acts as a catalytic chaperone that increases the ATP-binding affinity of the ATP-hydrolyzing subunit KdpB by the formation of a transient KdpB/KdpC/ATP ternary complex.</text>
</comment>
<comment type="subunit">
    <text evidence="1">The system is composed of three essential subunits: KdpA, KdpB and KdpC.</text>
</comment>
<comment type="subcellular location">
    <subcellularLocation>
        <location evidence="1">Cell inner membrane</location>
        <topology evidence="1">Single-pass membrane protein</topology>
    </subcellularLocation>
</comment>
<comment type="similarity">
    <text evidence="1">Belongs to the KdpC family.</text>
</comment>
<organism>
    <name type="scientific">Enterobacter sp. (strain 638)</name>
    <dbReference type="NCBI Taxonomy" id="399742"/>
    <lineage>
        <taxon>Bacteria</taxon>
        <taxon>Pseudomonadati</taxon>
        <taxon>Pseudomonadota</taxon>
        <taxon>Gammaproteobacteria</taxon>
        <taxon>Enterobacterales</taxon>
        <taxon>Enterobacteriaceae</taxon>
        <taxon>Enterobacter</taxon>
    </lineage>
</organism>
<accession>A4W859</accession>
<gene>
    <name evidence="1" type="primary">kdpC</name>
    <name type="ordered locus">Ent638_1208</name>
</gene>
<name>KDPC_ENT38</name>
<feature type="chain" id="PRO_1000059217" description="Potassium-transporting ATPase KdpC subunit">
    <location>
        <begin position="1"/>
        <end position="191"/>
    </location>
</feature>
<feature type="transmembrane region" description="Helical" evidence="1">
    <location>
        <begin position="6"/>
        <end position="26"/>
    </location>
</feature>
<sequence length="191" mass="20546">MTMLRPAILLFILLTLVTGGLYPLLTTALGQWWFTDQANGSLIIQNGENRGSRLIGQNFTDARYFQGRPSATAGSPYNPMASGGSNLAGSNPELDNAIGERVAALRAANPQASRDVPVELVTASASGLDYSLTSESVAWQIPRVAAARQLTTEQVRKVVEEHTQKPLVNFIGMPVANIVELNLALDAQRKN</sequence>